<reference key="1">
    <citation type="journal article" date="2005" name="Proc. Natl. Acad. Sci. U.S.A.">
        <title>Comparison of the complete genome sequences of Pseudomonas syringae pv. syringae B728a and pv. tomato DC3000.</title>
        <authorList>
            <person name="Feil H."/>
            <person name="Feil W.S."/>
            <person name="Chain P."/>
            <person name="Larimer F."/>
            <person name="Dibartolo G."/>
            <person name="Copeland A."/>
            <person name="Lykidis A."/>
            <person name="Trong S."/>
            <person name="Nolan M."/>
            <person name="Goltsman E."/>
            <person name="Thiel J."/>
            <person name="Malfatti S."/>
            <person name="Loper J.E."/>
            <person name="Lapidus A."/>
            <person name="Detter J.C."/>
            <person name="Land M."/>
            <person name="Richardson P.M."/>
            <person name="Kyrpides N.C."/>
            <person name="Ivanova N."/>
            <person name="Lindow S.E."/>
        </authorList>
    </citation>
    <scope>NUCLEOTIDE SEQUENCE [LARGE SCALE GENOMIC DNA]</scope>
    <source>
        <strain>B728a</strain>
    </source>
</reference>
<sequence length="185" mass="20534">MVSSWRVQQAAQDIRAGAVIAYPTEAVWGLGCDPWDEEAVYRLLAIKSRPVEKGLILIADNIRQFDFLFEDFPELWLDRMASTWPGPNTWLVPHQNLLPEWITGIHETVALRVTDHPTVRELCALVGPLISTSANPAGRPAARSRLRVEQYFRGQIDGVLGGSLGGRRNPSVIRDIATAQIVRAG</sequence>
<comment type="function">
    <text evidence="1">Required for the formation of a threonylcarbamoyl group on adenosine at position 37 (t(6)A37) in tRNAs that read codons beginning with adenine. Catalyzes the conversion of L-threonine, HCO(3)(-)/CO(2) and ATP to give threonylcarbamoyl-AMP (TC-AMP) as the acyladenylate intermediate, with the release of diphosphate.</text>
</comment>
<comment type="catalytic activity">
    <reaction evidence="1">
        <text>L-threonine + hydrogencarbonate + ATP = L-threonylcarbamoyladenylate + diphosphate + H2O</text>
        <dbReference type="Rhea" id="RHEA:36407"/>
        <dbReference type="ChEBI" id="CHEBI:15377"/>
        <dbReference type="ChEBI" id="CHEBI:17544"/>
        <dbReference type="ChEBI" id="CHEBI:30616"/>
        <dbReference type="ChEBI" id="CHEBI:33019"/>
        <dbReference type="ChEBI" id="CHEBI:57926"/>
        <dbReference type="ChEBI" id="CHEBI:73682"/>
        <dbReference type="EC" id="2.7.7.87"/>
    </reaction>
</comment>
<comment type="subcellular location">
    <subcellularLocation>
        <location evidence="1">Cytoplasm</location>
    </subcellularLocation>
</comment>
<comment type="similarity">
    <text evidence="1">Belongs to the SUA5 family. TsaC subfamily.</text>
</comment>
<protein>
    <recommendedName>
        <fullName evidence="1">Threonylcarbamoyl-AMP synthase</fullName>
        <shortName evidence="1">TC-AMP synthase</shortName>
        <ecNumber evidence="1">2.7.7.87</ecNumber>
    </recommendedName>
    <alternativeName>
        <fullName evidence="1">L-threonylcarbamoyladenylate synthase</fullName>
    </alternativeName>
    <alternativeName>
        <fullName evidence="1">t(6)A37 threonylcarbamoyladenosine biosynthesis protein TsaC</fullName>
    </alternativeName>
    <alternativeName>
        <fullName evidence="1">tRNA threonylcarbamoyladenosine biosynthesis protein TsaC</fullName>
    </alternativeName>
</protein>
<proteinExistence type="inferred from homology"/>
<feature type="chain" id="PRO_0000352961" description="Threonylcarbamoyl-AMP synthase">
    <location>
        <begin position="1"/>
        <end position="185"/>
    </location>
</feature>
<feature type="domain" description="YrdC-like" evidence="1">
    <location>
        <begin position="4"/>
        <end position="185"/>
    </location>
</feature>
<evidence type="ECO:0000255" key="1">
    <source>
        <dbReference type="HAMAP-Rule" id="MF_01852"/>
    </source>
</evidence>
<name>TSAC_PSEU2</name>
<keyword id="KW-0067">ATP-binding</keyword>
<keyword id="KW-0963">Cytoplasm</keyword>
<keyword id="KW-0547">Nucleotide-binding</keyword>
<keyword id="KW-0548">Nucleotidyltransferase</keyword>
<keyword id="KW-0808">Transferase</keyword>
<keyword id="KW-0819">tRNA processing</keyword>
<organism>
    <name type="scientific">Pseudomonas syringae pv. syringae (strain B728a)</name>
    <dbReference type="NCBI Taxonomy" id="205918"/>
    <lineage>
        <taxon>Bacteria</taxon>
        <taxon>Pseudomonadati</taxon>
        <taxon>Pseudomonadota</taxon>
        <taxon>Gammaproteobacteria</taxon>
        <taxon>Pseudomonadales</taxon>
        <taxon>Pseudomonadaceae</taxon>
        <taxon>Pseudomonas</taxon>
        <taxon>Pseudomonas syringae</taxon>
    </lineage>
</organism>
<accession>Q500S6</accession>
<gene>
    <name evidence="1" type="primary">tsaC</name>
    <name type="synonym">rimN</name>
    <name type="ordered locus">Psyr_0022</name>
</gene>
<dbReference type="EC" id="2.7.7.87" evidence="1"/>
<dbReference type="EMBL" id="CP000075">
    <property type="protein sequence ID" value="AAY35096.1"/>
    <property type="molecule type" value="Genomic_DNA"/>
</dbReference>
<dbReference type="RefSeq" id="WP_003340101.1">
    <property type="nucleotide sequence ID" value="NC_007005.1"/>
</dbReference>
<dbReference type="RefSeq" id="YP_233134.1">
    <property type="nucleotide sequence ID" value="NC_007005.1"/>
</dbReference>
<dbReference type="SMR" id="Q500S6"/>
<dbReference type="STRING" id="205918.Psyr_0022"/>
<dbReference type="KEGG" id="psb:Psyr_0022"/>
<dbReference type="PATRIC" id="fig|205918.7.peg.22"/>
<dbReference type="eggNOG" id="COG0009">
    <property type="taxonomic scope" value="Bacteria"/>
</dbReference>
<dbReference type="HOGENOM" id="CLU_031397_6_0_6"/>
<dbReference type="OrthoDB" id="9814580at2"/>
<dbReference type="Proteomes" id="UP000000426">
    <property type="component" value="Chromosome"/>
</dbReference>
<dbReference type="GO" id="GO:0005737">
    <property type="term" value="C:cytoplasm"/>
    <property type="evidence" value="ECO:0007669"/>
    <property type="project" value="UniProtKB-SubCell"/>
</dbReference>
<dbReference type="GO" id="GO:0005524">
    <property type="term" value="F:ATP binding"/>
    <property type="evidence" value="ECO:0007669"/>
    <property type="project" value="UniProtKB-UniRule"/>
</dbReference>
<dbReference type="GO" id="GO:0003725">
    <property type="term" value="F:double-stranded RNA binding"/>
    <property type="evidence" value="ECO:0007669"/>
    <property type="project" value="InterPro"/>
</dbReference>
<dbReference type="GO" id="GO:0061710">
    <property type="term" value="F:L-threonylcarbamoyladenylate synthase"/>
    <property type="evidence" value="ECO:0007669"/>
    <property type="project" value="UniProtKB-EC"/>
</dbReference>
<dbReference type="GO" id="GO:0000049">
    <property type="term" value="F:tRNA binding"/>
    <property type="evidence" value="ECO:0007669"/>
    <property type="project" value="TreeGrafter"/>
</dbReference>
<dbReference type="GO" id="GO:0006450">
    <property type="term" value="P:regulation of translational fidelity"/>
    <property type="evidence" value="ECO:0007669"/>
    <property type="project" value="TreeGrafter"/>
</dbReference>
<dbReference type="GO" id="GO:0002949">
    <property type="term" value="P:tRNA threonylcarbamoyladenosine modification"/>
    <property type="evidence" value="ECO:0007669"/>
    <property type="project" value="UniProtKB-UniRule"/>
</dbReference>
<dbReference type="FunFam" id="3.90.870.10:FF:000004">
    <property type="entry name" value="Threonylcarbamoyl-AMP synthase"/>
    <property type="match status" value="1"/>
</dbReference>
<dbReference type="Gene3D" id="3.90.870.10">
    <property type="entry name" value="DHBP synthase"/>
    <property type="match status" value="1"/>
</dbReference>
<dbReference type="HAMAP" id="MF_01852">
    <property type="entry name" value="TsaC"/>
    <property type="match status" value="1"/>
</dbReference>
<dbReference type="InterPro" id="IPR017945">
    <property type="entry name" value="DHBP_synth_RibB-like_a/b_dom"/>
</dbReference>
<dbReference type="InterPro" id="IPR006070">
    <property type="entry name" value="Sua5-like_dom"/>
</dbReference>
<dbReference type="InterPro" id="IPR023535">
    <property type="entry name" value="TC-AMP_synthase"/>
</dbReference>
<dbReference type="InterPro" id="IPR050156">
    <property type="entry name" value="TC-AMP_synthase_SUA5"/>
</dbReference>
<dbReference type="PANTHER" id="PTHR17490">
    <property type="entry name" value="SUA5"/>
    <property type="match status" value="1"/>
</dbReference>
<dbReference type="PANTHER" id="PTHR17490:SF18">
    <property type="entry name" value="THREONYLCARBAMOYL-AMP SYNTHASE"/>
    <property type="match status" value="1"/>
</dbReference>
<dbReference type="Pfam" id="PF01300">
    <property type="entry name" value="Sua5_yciO_yrdC"/>
    <property type="match status" value="1"/>
</dbReference>
<dbReference type="SUPFAM" id="SSF55821">
    <property type="entry name" value="YrdC/RibB"/>
    <property type="match status" value="1"/>
</dbReference>
<dbReference type="PROSITE" id="PS51163">
    <property type="entry name" value="YRDC"/>
    <property type="match status" value="1"/>
</dbReference>